<evidence type="ECO:0000250" key="1">
    <source>
        <dbReference type="UniProtKB" id="Q66GR3"/>
    </source>
</evidence>
<evidence type="ECO:0000255" key="2">
    <source>
        <dbReference type="PROSITE-ProRule" id="PRU00981"/>
    </source>
</evidence>
<evidence type="ECO:0000256" key="3">
    <source>
        <dbReference type="SAM" id="MobiDB-lite"/>
    </source>
</evidence>
<evidence type="ECO:0000305" key="4"/>
<evidence type="ECO:0007744" key="5">
    <source>
    </source>
</evidence>
<protein>
    <recommendedName>
        <fullName>Transcription factor bHLH122</fullName>
    </recommendedName>
    <alternativeName>
        <fullName>Basic helix-loop-helix protein 122</fullName>
        <shortName>AtbHLH122</shortName>
        <shortName>bHLH 122</shortName>
    </alternativeName>
    <alternativeName>
        <fullName>Transcription factor EN 70</fullName>
    </alternativeName>
    <alternativeName>
        <fullName>bHLH transcription factor bHLH122</fullName>
    </alternativeName>
</protein>
<reference key="1">
    <citation type="journal article" date="2000" name="Nature">
        <title>Sequence and analysis of chromosome 1 of the plant Arabidopsis thaliana.</title>
        <authorList>
            <person name="Theologis A."/>
            <person name="Ecker J.R."/>
            <person name="Palm C.J."/>
            <person name="Federspiel N.A."/>
            <person name="Kaul S."/>
            <person name="White O."/>
            <person name="Alonso J."/>
            <person name="Altafi H."/>
            <person name="Araujo R."/>
            <person name="Bowman C.L."/>
            <person name="Brooks S.Y."/>
            <person name="Buehler E."/>
            <person name="Chan A."/>
            <person name="Chao Q."/>
            <person name="Chen H."/>
            <person name="Cheuk R.F."/>
            <person name="Chin C.W."/>
            <person name="Chung M.K."/>
            <person name="Conn L."/>
            <person name="Conway A.B."/>
            <person name="Conway A.R."/>
            <person name="Creasy T.H."/>
            <person name="Dewar K."/>
            <person name="Dunn P."/>
            <person name="Etgu P."/>
            <person name="Feldblyum T.V."/>
            <person name="Feng J.-D."/>
            <person name="Fong B."/>
            <person name="Fujii C.Y."/>
            <person name="Gill J.E."/>
            <person name="Goldsmith A.D."/>
            <person name="Haas B."/>
            <person name="Hansen N.F."/>
            <person name="Hughes B."/>
            <person name="Huizar L."/>
            <person name="Hunter J.L."/>
            <person name="Jenkins J."/>
            <person name="Johnson-Hopson C."/>
            <person name="Khan S."/>
            <person name="Khaykin E."/>
            <person name="Kim C.J."/>
            <person name="Koo H.L."/>
            <person name="Kremenetskaia I."/>
            <person name="Kurtz D.B."/>
            <person name="Kwan A."/>
            <person name="Lam B."/>
            <person name="Langin-Hooper S."/>
            <person name="Lee A."/>
            <person name="Lee J.M."/>
            <person name="Lenz C.A."/>
            <person name="Li J.H."/>
            <person name="Li Y.-P."/>
            <person name="Lin X."/>
            <person name="Liu S.X."/>
            <person name="Liu Z.A."/>
            <person name="Luros J.S."/>
            <person name="Maiti R."/>
            <person name="Marziali A."/>
            <person name="Militscher J."/>
            <person name="Miranda M."/>
            <person name="Nguyen M."/>
            <person name="Nierman W.C."/>
            <person name="Osborne B.I."/>
            <person name="Pai G."/>
            <person name="Peterson J."/>
            <person name="Pham P.K."/>
            <person name="Rizzo M."/>
            <person name="Rooney T."/>
            <person name="Rowley D."/>
            <person name="Sakano H."/>
            <person name="Salzberg S.L."/>
            <person name="Schwartz J.R."/>
            <person name="Shinn P."/>
            <person name="Southwick A.M."/>
            <person name="Sun H."/>
            <person name="Tallon L.J."/>
            <person name="Tambunga G."/>
            <person name="Toriumi M.J."/>
            <person name="Town C.D."/>
            <person name="Utterback T."/>
            <person name="Van Aken S."/>
            <person name="Vaysberg M."/>
            <person name="Vysotskaia V.S."/>
            <person name="Walker M."/>
            <person name="Wu D."/>
            <person name="Yu G."/>
            <person name="Fraser C.M."/>
            <person name="Venter J.C."/>
            <person name="Davis R.W."/>
        </authorList>
    </citation>
    <scope>NUCLEOTIDE SEQUENCE [LARGE SCALE GENOMIC DNA]</scope>
    <source>
        <strain>cv. Columbia</strain>
    </source>
</reference>
<reference key="2">
    <citation type="journal article" date="2017" name="Plant J.">
        <title>Araport11: a complete reannotation of the Arabidopsis thaliana reference genome.</title>
        <authorList>
            <person name="Cheng C.Y."/>
            <person name="Krishnakumar V."/>
            <person name="Chan A.P."/>
            <person name="Thibaud-Nissen F."/>
            <person name="Schobel S."/>
            <person name="Town C.D."/>
        </authorList>
    </citation>
    <scope>GENOME REANNOTATION</scope>
    <source>
        <strain>cv. Columbia</strain>
    </source>
</reference>
<reference key="3">
    <citation type="journal article" date="2003" name="Science">
        <title>Empirical analysis of transcriptional activity in the Arabidopsis genome.</title>
        <authorList>
            <person name="Yamada K."/>
            <person name="Lim J."/>
            <person name="Dale J.M."/>
            <person name="Chen H."/>
            <person name="Shinn P."/>
            <person name="Palm C.J."/>
            <person name="Southwick A.M."/>
            <person name="Wu H.C."/>
            <person name="Kim C.J."/>
            <person name="Nguyen M."/>
            <person name="Pham P.K."/>
            <person name="Cheuk R.F."/>
            <person name="Karlin-Newmann G."/>
            <person name="Liu S.X."/>
            <person name="Lam B."/>
            <person name="Sakano H."/>
            <person name="Wu T."/>
            <person name="Yu G."/>
            <person name="Miranda M."/>
            <person name="Quach H.L."/>
            <person name="Tripp M."/>
            <person name="Chang C.H."/>
            <person name="Lee J.M."/>
            <person name="Toriumi M.J."/>
            <person name="Chan M.M."/>
            <person name="Tang C.C."/>
            <person name="Onodera C.S."/>
            <person name="Deng J.M."/>
            <person name="Akiyama K."/>
            <person name="Ansari Y."/>
            <person name="Arakawa T."/>
            <person name="Banh J."/>
            <person name="Banno F."/>
            <person name="Bowser L."/>
            <person name="Brooks S.Y."/>
            <person name="Carninci P."/>
            <person name="Chao Q."/>
            <person name="Choy N."/>
            <person name="Enju A."/>
            <person name="Goldsmith A.D."/>
            <person name="Gurjal M."/>
            <person name="Hansen N.F."/>
            <person name="Hayashizaki Y."/>
            <person name="Johnson-Hopson C."/>
            <person name="Hsuan V.W."/>
            <person name="Iida K."/>
            <person name="Karnes M."/>
            <person name="Khan S."/>
            <person name="Koesema E."/>
            <person name="Ishida J."/>
            <person name="Jiang P.X."/>
            <person name="Jones T."/>
            <person name="Kawai J."/>
            <person name="Kamiya A."/>
            <person name="Meyers C."/>
            <person name="Nakajima M."/>
            <person name="Narusaka M."/>
            <person name="Seki M."/>
            <person name="Sakurai T."/>
            <person name="Satou M."/>
            <person name="Tamse R."/>
            <person name="Vaysberg M."/>
            <person name="Wallender E.K."/>
            <person name="Wong C."/>
            <person name="Yamamura Y."/>
            <person name="Yuan S."/>
            <person name="Shinozaki K."/>
            <person name="Davis R.W."/>
            <person name="Theologis A."/>
            <person name="Ecker J.R."/>
        </authorList>
    </citation>
    <scope>NUCLEOTIDE SEQUENCE [LARGE SCALE MRNA]</scope>
    <source>
        <strain>cv. Columbia</strain>
    </source>
</reference>
<reference key="4">
    <citation type="journal article" date="2003" name="Mol. Biol. Evol.">
        <title>The basic helix-loop-helix transcription factor family in plants: a genome-wide study of protein structure and functional diversity.</title>
        <authorList>
            <person name="Heim M.A."/>
            <person name="Jakoby M."/>
            <person name="Werber M."/>
            <person name="Martin C."/>
            <person name="Weisshaar B."/>
            <person name="Bailey P.C."/>
        </authorList>
    </citation>
    <scope>GENE FAMILY</scope>
    <scope>NOMENCLATURE</scope>
</reference>
<reference key="5">
    <citation type="journal article" date="2003" name="Plant Cell">
        <title>The Arabidopsis basic/helix-loop-helix transcription factor family.</title>
        <authorList>
            <person name="Toledo-Ortiz G."/>
            <person name="Huq E."/>
            <person name="Quail P.H."/>
        </authorList>
    </citation>
    <scope>GENE FAMILY</scope>
</reference>
<reference key="6">
    <citation type="journal article" date="2003" name="Plant Cell">
        <title>Update on the basic helix-loop-helix transcription factor gene family in Arabidopsis thaliana.</title>
        <authorList>
            <person name="Bailey P.C."/>
            <person name="Martin C."/>
            <person name="Toledo-Ortiz G."/>
            <person name="Quail P.H."/>
            <person name="Huq E."/>
            <person name="Heim M.A."/>
            <person name="Jakoby M."/>
            <person name="Werber M."/>
            <person name="Weisshaar B."/>
        </authorList>
    </citation>
    <scope>GENE FAMILY</scope>
    <scope>NOMENCLATURE</scope>
</reference>
<reference key="7">
    <citation type="journal article" date="2009" name="Plant Physiol.">
        <title>Large-scale Arabidopsis phosphoproteome profiling reveals novel chloroplast kinase substrates and phosphorylation networks.</title>
        <authorList>
            <person name="Reiland S."/>
            <person name="Messerli G."/>
            <person name="Baerenfaller K."/>
            <person name="Gerrits B."/>
            <person name="Endler A."/>
            <person name="Grossmann J."/>
            <person name="Gruissem W."/>
            <person name="Baginsky S."/>
        </authorList>
    </citation>
    <scope>PHOSPHORYLATION [LARGE SCALE ANALYSIS] AT SER-213 AND SER-234</scope>
    <scope>IDENTIFICATION BY MASS SPECTROMETRY [LARGE SCALE ANALYSIS]</scope>
</reference>
<sequence>MESEFQQHHFLLHDHQHQRPRNSGLIRYQSAPSSYFSSFGESIEEFLDRPTSPETERILSGFLQTTDTSDNVDSFLHHTFNSDGTEKKPPEVKTEDEDAEIPVTATATAMEVVVSGDGEISVNPEVSIGYVASVSRNKRPREKDDRTPVNNLARHNSSPAGLFSSIDVETAYAAVMKSMGGFGGSNVMSTSNTEASSLTPRSKLLPPTSRAMSPISEVDVKPGFSSRLPPRTLSGGFNRSFGNEGSASSKLTALARTQSGGLDQYKTKDEDSASRRPPLAHHMSLPKSLSDIEQLLSDSIPCKIRAKRGCATHPRSIAERVRRTKISERMRKLQDLVPNMDTQTNTADMLDLAVQYIKDLQEQVKALEESRARCRCSSA</sequence>
<accession>Q9C690</accession>
<feature type="chain" id="PRO_0000358807" description="Transcription factor bHLH122">
    <location>
        <begin position="1"/>
        <end position="379"/>
    </location>
</feature>
<feature type="domain" description="bHLH" evidence="2">
    <location>
        <begin position="310"/>
        <end position="360"/>
    </location>
</feature>
<feature type="region of interest" description="Disordered" evidence="3">
    <location>
        <begin position="1"/>
        <end position="21"/>
    </location>
</feature>
<feature type="region of interest" description="Disordered" evidence="3">
    <location>
        <begin position="79"/>
        <end position="98"/>
    </location>
</feature>
<feature type="region of interest" description="Disordered" evidence="3">
    <location>
        <begin position="133"/>
        <end position="156"/>
    </location>
</feature>
<feature type="region of interest" description="Disordered" evidence="3">
    <location>
        <begin position="190"/>
        <end position="286"/>
    </location>
</feature>
<feature type="compositionally biased region" description="Basic and acidic residues" evidence="3">
    <location>
        <begin position="1"/>
        <end position="17"/>
    </location>
</feature>
<feature type="compositionally biased region" description="Basic and acidic residues" evidence="3">
    <location>
        <begin position="84"/>
        <end position="93"/>
    </location>
</feature>
<feature type="compositionally biased region" description="Polar residues" evidence="3">
    <location>
        <begin position="190"/>
        <end position="200"/>
    </location>
</feature>
<feature type="compositionally biased region" description="Polar residues" evidence="3">
    <location>
        <begin position="235"/>
        <end position="261"/>
    </location>
</feature>
<feature type="compositionally biased region" description="Basic and acidic residues" evidence="3">
    <location>
        <begin position="265"/>
        <end position="274"/>
    </location>
</feature>
<feature type="modified residue" description="Phosphoserine" evidence="1">
    <location>
        <position position="74"/>
    </location>
</feature>
<feature type="modified residue" description="Phosphoserine" evidence="5">
    <location>
        <position position="213"/>
    </location>
</feature>
<feature type="modified residue" description="Phosphoserine" evidence="5">
    <location>
        <position position="234"/>
    </location>
</feature>
<dbReference type="EMBL" id="AC079828">
    <property type="protein sequence ID" value="AAG50543.1"/>
    <property type="molecule type" value="Genomic_DNA"/>
</dbReference>
<dbReference type="EMBL" id="CP002684">
    <property type="protein sequence ID" value="AEE32626.1"/>
    <property type="molecule type" value="Genomic_DNA"/>
</dbReference>
<dbReference type="EMBL" id="AY034941">
    <property type="protein sequence ID" value="AAK59447.1"/>
    <property type="molecule type" value="mRNA"/>
</dbReference>
<dbReference type="EMBL" id="AY063120">
    <property type="protein sequence ID" value="AAL34294.1"/>
    <property type="molecule type" value="mRNA"/>
</dbReference>
<dbReference type="PIR" id="H96548">
    <property type="entry name" value="H96548"/>
</dbReference>
<dbReference type="SMR" id="Q9C690"/>
<dbReference type="BioGRID" id="26762">
    <property type="interactions" value="16"/>
</dbReference>
<dbReference type="FunCoup" id="Q9C690">
    <property type="interactions" value="75"/>
</dbReference>
<dbReference type="IntAct" id="Q9C690">
    <property type="interactions" value="15"/>
</dbReference>
<dbReference type="STRING" id="3702.Q9C690"/>
<dbReference type="iPTMnet" id="Q9C690"/>
<dbReference type="PaxDb" id="3702-AT1G51140.1"/>
<dbReference type="ProteomicsDB" id="240730"/>
<dbReference type="EnsemblPlants" id="AT1G51140.1">
    <property type="protein sequence ID" value="AT1G51140.1"/>
    <property type="gene ID" value="AT1G51140"/>
</dbReference>
<dbReference type="GeneID" id="841537"/>
<dbReference type="Gramene" id="AT1G51140.1">
    <property type="protein sequence ID" value="AT1G51140.1"/>
    <property type="gene ID" value="AT1G51140"/>
</dbReference>
<dbReference type="KEGG" id="ath:AT1G51140"/>
<dbReference type="Araport" id="AT1G51140"/>
<dbReference type="TAIR" id="AT1G51140">
    <property type="gene designation" value="FBH3"/>
</dbReference>
<dbReference type="eggNOG" id="ENOG502R5PU">
    <property type="taxonomic scope" value="Eukaryota"/>
</dbReference>
<dbReference type="HOGENOM" id="CLU_042981_0_1_1"/>
<dbReference type="InParanoid" id="Q9C690"/>
<dbReference type="OMA" id="MSDNMTG"/>
<dbReference type="PhylomeDB" id="Q9C690"/>
<dbReference type="PRO" id="PR:Q9C690"/>
<dbReference type="Proteomes" id="UP000006548">
    <property type="component" value="Chromosome 1"/>
</dbReference>
<dbReference type="ExpressionAtlas" id="Q9C690">
    <property type="expression patterns" value="baseline and differential"/>
</dbReference>
<dbReference type="GO" id="GO:0005634">
    <property type="term" value="C:nucleus"/>
    <property type="evidence" value="ECO:0000314"/>
    <property type="project" value="UniProtKB"/>
</dbReference>
<dbReference type="GO" id="GO:0000987">
    <property type="term" value="F:cis-regulatory region sequence-specific DNA binding"/>
    <property type="evidence" value="ECO:0000314"/>
    <property type="project" value="UniProtKB"/>
</dbReference>
<dbReference type="GO" id="GO:0003700">
    <property type="term" value="F:DNA-binding transcription factor activity"/>
    <property type="evidence" value="ECO:0000314"/>
    <property type="project" value="TAIR"/>
</dbReference>
<dbReference type="GO" id="GO:0042803">
    <property type="term" value="F:protein homodimerization activity"/>
    <property type="evidence" value="ECO:0000314"/>
    <property type="project" value="UniProtKB"/>
</dbReference>
<dbReference type="GO" id="GO:0000976">
    <property type="term" value="F:transcription cis-regulatory region binding"/>
    <property type="evidence" value="ECO:0000314"/>
    <property type="project" value="UniProtKB"/>
</dbReference>
<dbReference type="GO" id="GO:0071215">
    <property type="term" value="P:cellular response to abscisic acid stimulus"/>
    <property type="evidence" value="ECO:0000314"/>
    <property type="project" value="UniProtKB"/>
</dbReference>
<dbReference type="GO" id="GO:0042335">
    <property type="term" value="P:cuticle development"/>
    <property type="evidence" value="ECO:0000315"/>
    <property type="project" value="TAIR"/>
</dbReference>
<dbReference type="GO" id="GO:0048573">
    <property type="term" value="P:photoperiodism, flowering"/>
    <property type="evidence" value="ECO:0000315"/>
    <property type="project" value="TAIR"/>
</dbReference>
<dbReference type="GO" id="GO:0006355">
    <property type="term" value="P:regulation of DNA-templated transcription"/>
    <property type="evidence" value="ECO:0000304"/>
    <property type="project" value="TAIR"/>
</dbReference>
<dbReference type="GO" id="GO:0010468">
    <property type="term" value="P:regulation of gene expression"/>
    <property type="evidence" value="ECO:0000315"/>
    <property type="project" value="UniProtKB"/>
</dbReference>
<dbReference type="GO" id="GO:2000028">
    <property type="term" value="P:regulation of photoperiodism, flowering"/>
    <property type="evidence" value="ECO:0000315"/>
    <property type="project" value="UniProtKB"/>
</dbReference>
<dbReference type="GO" id="GO:1903286">
    <property type="term" value="P:regulation of potassium ion import"/>
    <property type="evidence" value="ECO:0000315"/>
    <property type="project" value="UniProtKB"/>
</dbReference>
<dbReference type="GO" id="GO:0010119">
    <property type="term" value="P:regulation of stomatal movement"/>
    <property type="evidence" value="ECO:0000314"/>
    <property type="project" value="TAIR"/>
</dbReference>
<dbReference type="GO" id="GO:1902456">
    <property type="term" value="P:regulation of stomatal opening"/>
    <property type="evidence" value="ECO:0000315"/>
    <property type="project" value="UniProtKB"/>
</dbReference>
<dbReference type="GO" id="GO:0009737">
    <property type="term" value="P:response to abscisic acid"/>
    <property type="evidence" value="ECO:0000314"/>
    <property type="project" value="UniProtKB"/>
</dbReference>
<dbReference type="GO" id="GO:0009416">
    <property type="term" value="P:response to light stimulus"/>
    <property type="evidence" value="ECO:0000315"/>
    <property type="project" value="UniProtKB"/>
</dbReference>
<dbReference type="GO" id="GO:0006970">
    <property type="term" value="P:response to osmotic stress"/>
    <property type="evidence" value="ECO:0000315"/>
    <property type="project" value="UniProtKB"/>
</dbReference>
<dbReference type="GO" id="GO:1902074">
    <property type="term" value="P:response to salt"/>
    <property type="evidence" value="ECO:0000315"/>
    <property type="project" value="UniProtKB"/>
</dbReference>
<dbReference type="GO" id="GO:0009414">
    <property type="term" value="P:response to water deprivation"/>
    <property type="evidence" value="ECO:0000315"/>
    <property type="project" value="UniProtKB"/>
</dbReference>
<dbReference type="CDD" id="cd11393">
    <property type="entry name" value="bHLH_AtbHLH_like"/>
    <property type="match status" value="1"/>
</dbReference>
<dbReference type="FunFam" id="4.10.280.10:FF:000021">
    <property type="entry name" value="Transcription factor bHLH130 family"/>
    <property type="match status" value="1"/>
</dbReference>
<dbReference type="Gene3D" id="4.10.280.10">
    <property type="entry name" value="Helix-loop-helix DNA-binding domain"/>
    <property type="match status" value="1"/>
</dbReference>
<dbReference type="InterPro" id="IPR045239">
    <property type="entry name" value="bHLH95_bHLH"/>
</dbReference>
<dbReference type="InterPro" id="IPR011598">
    <property type="entry name" value="bHLH_dom"/>
</dbReference>
<dbReference type="InterPro" id="IPR036638">
    <property type="entry name" value="HLH_DNA-bd_sf"/>
</dbReference>
<dbReference type="InterPro" id="IPR045843">
    <property type="entry name" value="IND-like"/>
</dbReference>
<dbReference type="PANTHER" id="PTHR16223:SF279">
    <property type="entry name" value="TRANSCRIPTION FACTOR BHLH122"/>
    <property type="match status" value="1"/>
</dbReference>
<dbReference type="PANTHER" id="PTHR16223">
    <property type="entry name" value="TRANSCRIPTION FACTOR BHLH83-RELATED"/>
    <property type="match status" value="1"/>
</dbReference>
<dbReference type="Pfam" id="PF00010">
    <property type="entry name" value="HLH"/>
    <property type="match status" value="1"/>
</dbReference>
<dbReference type="SMART" id="SM00353">
    <property type="entry name" value="HLH"/>
    <property type="match status" value="1"/>
</dbReference>
<dbReference type="SUPFAM" id="SSF47459">
    <property type="entry name" value="HLH, helix-loop-helix DNA-binding domain"/>
    <property type="match status" value="1"/>
</dbReference>
<dbReference type="PROSITE" id="PS50888">
    <property type="entry name" value="BHLH"/>
    <property type="match status" value="1"/>
</dbReference>
<gene>
    <name type="primary">BHLH122</name>
    <name type="synonym">EN70</name>
    <name type="ordered locus">At1g51140</name>
    <name type="ORF">F23H24.3</name>
</gene>
<organism>
    <name type="scientific">Arabidopsis thaliana</name>
    <name type="common">Mouse-ear cress</name>
    <dbReference type="NCBI Taxonomy" id="3702"/>
    <lineage>
        <taxon>Eukaryota</taxon>
        <taxon>Viridiplantae</taxon>
        <taxon>Streptophyta</taxon>
        <taxon>Embryophyta</taxon>
        <taxon>Tracheophyta</taxon>
        <taxon>Spermatophyta</taxon>
        <taxon>Magnoliopsida</taxon>
        <taxon>eudicotyledons</taxon>
        <taxon>Gunneridae</taxon>
        <taxon>Pentapetalae</taxon>
        <taxon>rosids</taxon>
        <taxon>malvids</taxon>
        <taxon>Brassicales</taxon>
        <taxon>Brassicaceae</taxon>
        <taxon>Camelineae</taxon>
        <taxon>Arabidopsis</taxon>
    </lineage>
</organism>
<comment type="subunit">
    <text evidence="4">Homodimer.</text>
</comment>
<comment type="subcellular location">
    <subcellularLocation>
        <location evidence="2">Nucleus</location>
    </subcellularLocation>
</comment>
<name>BH122_ARATH</name>
<keyword id="KW-0238">DNA-binding</keyword>
<keyword id="KW-0539">Nucleus</keyword>
<keyword id="KW-0597">Phosphoprotein</keyword>
<keyword id="KW-1185">Reference proteome</keyword>
<keyword id="KW-0804">Transcription</keyword>
<keyword id="KW-0805">Transcription regulation</keyword>
<proteinExistence type="evidence at protein level"/>